<organism>
    <name type="scientific">Escherichia coli (strain K12 / MC4100 / BW2952)</name>
    <dbReference type="NCBI Taxonomy" id="595496"/>
    <lineage>
        <taxon>Bacteria</taxon>
        <taxon>Pseudomonadati</taxon>
        <taxon>Pseudomonadota</taxon>
        <taxon>Gammaproteobacteria</taxon>
        <taxon>Enterobacterales</taxon>
        <taxon>Enterobacteriaceae</taxon>
        <taxon>Escherichia</taxon>
    </lineage>
</organism>
<gene>
    <name evidence="2" type="primary">cysN</name>
    <name type="ordered locus">BWG_2487</name>
</gene>
<accession>C4ZZQ5</accession>
<comment type="function">
    <text evidence="2">With CysD forms the ATP sulfurylase (ATPS) that catalyzes the adenylation of sulfate producing adenosine 5'-phosphosulfate (APS) and diphosphate, the first enzymatic step in sulfur assimilation pathway. APS synthesis involves the formation of a high-energy phosphoric-sulfuric acid anhydride bond driven by GTP hydrolysis by CysN coupled to ATP hydrolysis by CysD.</text>
</comment>
<comment type="catalytic activity">
    <reaction evidence="2">
        <text>sulfate + ATP + H(+) = adenosine 5'-phosphosulfate + diphosphate</text>
        <dbReference type="Rhea" id="RHEA:18133"/>
        <dbReference type="ChEBI" id="CHEBI:15378"/>
        <dbReference type="ChEBI" id="CHEBI:16189"/>
        <dbReference type="ChEBI" id="CHEBI:30616"/>
        <dbReference type="ChEBI" id="CHEBI:33019"/>
        <dbReference type="ChEBI" id="CHEBI:58243"/>
        <dbReference type="EC" id="2.7.7.4"/>
    </reaction>
</comment>
<comment type="pathway">
    <text evidence="2">Sulfur metabolism; hydrogen sulfide biosynthesis; sulfite from sulfate: step 1/3.</text>
</comment>
<comment type="subunit">
    <text evidence="2">Heterodimer composed of CysD, the smaller subunit, and CysN.</text>
</comment>
<comment type="similarity">
    <text evidence="2">Belongs to the TRAFAC class translation factor GTPase superfamily. Classic translation factor GTPase family. CysN/NodQ subfamily.</text>
</comment>
<keyword id="KW-0067">ATP-binding</keyword>
<keyword id="KW-0342">GTP-binding</keyword>
<keyword id="KW-0547">Nucleotide-binding</keyword>
<keyword id="KW-0548">Nucleotidyltransferase</keyword>
<keyword id="KW-0808">Transferase</keyword>
<name>CYSN_ECOBW</name>
<proteinExistence type="inferred from homology"/>
<dbReference type="EC" id="2.7.7.4" evidence="2"/>
<dbReference type="EMBL" id="CP001396">
    <property type="protein sequence ID" value="ACR65596.1"/>
    <property type="molecule type" value="Genomic_DNA"/>
</dbReference>
<dbReference type="RefSeq" id="WP_001090361.1">
    <property type="nucleotide sequence ID" value="NC_012759.1"/>
</dbReference>
<dbReference type="SMR" id="C4ZZQ5"/>
<dbReference type="GeneID" id="93779255"/>
<dbReference type="KEGG" id="ebw:BWG_2487"/>
<dbReference type="HOGENOM" id="CLU_007265_5_2_6"/>
<dbReference type="UniPathway" id="UPA00140">
    <property type="reaction ID" value="UER00204"/>
</dbReference>
<dbReference type="GO" id="GO:0005524">
    <property type="term" value="F:ATP binding"/>
    <property type="evidence" value="ECO:0007669"/>
    <property type="project" value="UniProtKB-KW"/>
</dbReference>
<dbReference type="GO" id="GO:0005525">
    <property type="term" value="F:GTP binding"/>
    <property type="evidence" value="ECO:0007669"/>
    <property type="project" value="UniProtKB-UniRule"/>
</dbReference>
<dbReference type="GO" id="GO:0003924">
    <property type="term" value="F:GTPase activity"/>
    <property type="evidence" value="ECO:0007669"/>
    <property type="project" value="InterPro"/>
</dbReference>
<dbReference type="GO" id="GO:0004781">
    <property type="term" value="F:sulfate adenylyltransferase (ATP) activity"/>
    <property type="evidence" value="ECO:0007669"/>
    <property type="project" value="UniProtKB-UniRule"/>
</dbReference>
<dbReference type="GO" id="GO:0070814">
    <property type="term" value="P:hydrogen sulfide biosynthetic process"/>
    <property type="evidence" value="ECO:0007669"/>
    <property type="project" value="UniProtKB-UniRule"/>
</dbReference>
<dbReference type="GO" id="GO:0000103">
    <property type="term" value="P:sulfate assimilation"/>
    <property type="evidence" value="ECO:0007669"/>
    <property type="project" value="UniProtKB-UniRule"/>
</dbReference>
<dbReference type="CDD" id="cd04166">
    <property type="entry name" value="CysN_ATPS"/>
    <property type="match status" value="1"/>
</dbReference>
<dbReference type="CDD" id="cd03695">
    <property type="entry name" value="CysN_NodQ_II"/>
    <property type="match status" value="1"/>
</dbReference>
<dbReference type="CDD" id="cd04095">
    <property type="entry name" value="CysN_NoDQ_III"/>
    <property type="match status" value="1"/>
</dbReference>
<dbReference type="FunFam" id="2.40.30.10:FF:000027">
    <property type="entry name" value="Sulfate adenylyltransferase subunit 1"/>
    <property type="match status" value="1"/>
</dbReference>
<dbReference type="FunFam" id="2.40.30.10:FF:000031">
    <property type="entry name" value="Sulfate adenylyltransferase subunit 1"/>
    <property type="match status" value="1"/>
</dbReference>
<dbReference type="FunFam" id="3.40.50.300:FF:000119">
    <property type="entry name" value="Sulfate adenylyltransferase subunit 1"/>
    <property type="match status" value="1"/>
</dbReference>
<dbReference type="Gene3D" id="3.40.50.300">
    <property type="entry name" value="P-loop containing nucleotide triphosphate hydrolases"/>
    <property type="match status" value="1"/>
</dbReference>
<dbReference type="Gene3D" id="2.40.30.10">
    <property type="entry name" value="Translation factors"/>
    <property type="match status" value="2"/>
</dbReference>
<dbReference type="HAMAP" id="MF_00062">
    <property type="entry name" value="Sulf_adenylyltr_sub1"/>
    <property type="match status" value="1"/>
</dbReference>
<dbReference type="InterPro" id="IPR041757">
    <property type="entry name" value="CysN_GTP-bd"/>
</dbReference>
<dbReference type="InterPro" id="IPR044138">
    <property type="entry name" value="CysN_II"/>
</dbReference>
<dbReference type="InterPro" id="IPR044139">
    <property type="entry name" value="CysN_NoDQ_III"/>
</dbReference>
<dbReference type="InterPro" id="IPR031157">
    <property type="entry name" value="G_TR_CS"/>
</dbReference>
<dbReference type="InterPro" id="IPR054696">
    <property type="entry name" value="GTP-eEF1A_C"/>
</dbReference>
<dbReference type="InterPro" id="IPR027417">
    <property type="entry name" value="P-loop_NTPase"/>
</dbReference>
<dbReference type="InterPro" id="IPR005225">
    <property type="entry name" value="Small_GTP-bd"/>
</dbReference>
<dbReference type="InterPro" id="IPR011779">
    <property type="entry name" value="SO4_adenylTrfase_lsu"/>
</dbReference>
<dbReference type="InterPro" id="IPR000795">
    <property type="entry name" value="T_Tr_GTP-bd_dom"/>
</dbReference>
<dbReference type="InterPro" id="IPR050100">
    <property type="entry name" value="TRAFAC_GTPase_members"/>
</dbReference>
<dbReference type="InterPro" id="IPR009000">
    <property type="entry name" value="Transl_B-barrel_sf"/>
</dbReference>
<dbReference type="InterPro" id="IPR009001">
    <property type="entry name" value="Transl_elong_EF1A/Init_IF2_C"/>
</dbReference>
<dbReference type="NCBIfam" id="TIGR02034">
    <property type="entry name" value="CysN"/>
    <property type="match status" value="1"/>
</dbReference>
<dbReference type="NCBIfam" id="NF003478">
    <property type="entry name" value="PRK05124.1"/>
    <property type="match status" value="1"/>
</dbReference>
<dbReference type="NCBIfam" id="TIGR00231">
    <property type="entry name" value="small_GTP"/>
    <property type="match status" value="1"/>
</dbReference>
<dbReference type="PANTHER" id="PTHR23115">
    <property type="entry name" value="TRANSLATION FACTOR"/>
    <property type="match status" value="1"/>
</dbReference>
<dbReference type="Pfam" id="PF22594">
    <property type="entry name" value="GTP-eEF1A_C"/>
    <property type="match status" value="1"/>
</dbReference>
<dbReference type="Pfam" id="PF00009">
    <property type="entry name" value="GTP_EFTU"/>
    <property type="match status" value="1"/>
</dbReference>
<dbReference type="PRINTS" id="PR00315">
    <property type="entry name" value="ELONGATNFCT"/>
</dbReference>
<dbReference type="SUPFAM" id="SSF50465">
    <property type="entry name" value="EF-Tu/eEF-1alpha/eIF2-gamma C-terminal domain"/>
    <property type="match status" value="1"/>
</dbReference>
<dbReference type="SUPFAM" id="SSF52540">
    <property type="entry name" value="P-loop containing nucleoside triphosphate hydrolases"/>
    <property type="match status" value="1"/>
</dbReference>
<dbReference type="SUPFAM" id="SSF50447">
    <property type="entry name" value="Translation proteins"/>
    <property type="match status" value="1"/>
</dbReference>
<dbReference type="PROSITE" id="PS00301">
    <property type="entry name" value="G_TR_1"/>
    <property type="match status" value="1"/>
</dbReference>
<dbReference type="PROSITE" id="PS51722">
    <property type="entry name" value="G_TR_2"/>
    <property type="match status" value="1"/>
</dbReference>
<reference key="1">
    <citation type="journal article" date="2009" name="J. Bacteriol.">
        <title>Genomic sequencing reveals regulatory mutations and recombinational events in the widely used MC4100 lineage of Escherichia coli K-12.</title>
        <authorList>
            <person name="Ferenci T."/>
            <person name="Zhou Z."/>
            <person name="Betteridge T."/>
            <person name="Ren Y."/>
            <person name="Liu Y."/>
            <person name="Feng L."/>
            <person name="Reeves P.R."/>
            <person name="Wang L."/>
        </authorList>
    </citation>
    <scope>NUCLEOTIDE SEQUENCE [LARGE SCALE GENOMIC DNA]</scope>
    <source>
        <strain>K12 / MC4100 / BW2952</strain>
    </source>
</reference>
<sequence length="475" mass="52558">MNTALAQQIANEGGVEAWMIAQQHKSLLRFLTCGSVDDGKSTLIGRLLHDTRQIYEDQLSSLHNDSKRHGTQGEKLDLALLVDGLQAEREQGITIDVAYRYFSTEKRKFIIADTPGHEQYTRNMATGASTCELAILLIDARKGVLDQTRRHSFISTLLGIKHLVVAINKMDLVDYSEETFTRIREDYLTFAGQLPGNLDIRFVPLSALEGDNVASQSESMPWYSGPTLLEVLETVEIQRVVDAQPMRFPVQYVNRPNLDFRGYAGTLASGRVEVGQRVKVLPSGVESNVARIVTFDGDREEAFAGEAITLVLTDEIDISRGDLLLAADEALPAVQSASVDVVWMAEQPLSPGQSYDIKIAGKKTRARVDGIRYQVDINNLTQREVENLPLNGIGLVDLTFDEPLVLDRYQQNPVTGGLIFIDRLSNVTVGAGMVHEPVSQATAAPSEFSAFELELNALVRRHFPHWGARDLLGDK</sequence>
<protein>
    <recommendedName>
        <fullName evidence="2">Sulfate adenylyltransferase subunit 1</fullName>
        <ecNumber evidence="2">2.7.7.4</ecNumber>
    </recommendedName>
    <alternativeName>
        <fullName evidence="2">ATP-sulfurylase large subunit</fullName>
    </alternativeName>
    <alternativeName>
        <fullName evidence="2">Sulfate adenylate transferase</fullName>
        <shortName evidence="2">SAT</shortName>
    </alternativeName>
</protein>
<feature type="chain" id="PRO_1000202392" description="Sulfate adenylyltransferase subunit 1">
    <location>
        <begin position="1"/>
        <end position="475"/>
    </location>
</feature>
<feature type="domain" description="tr-type G">
    <location>
        <begin position="25"/>
        <end position="239"/>
    </location>
</feature>
<feature type="region of interest" description="G1" evidence="1">
    <location>
        <begin position="34"/>
        <end position="41"/>
    </location>
</feature>
<feature type="region of interest" description="G2" evidence="1">
    <location>
        <begin position="92"/>
        <end position="96"/>
    </location>
</feature>
<feature type="region of interest" description="G3" evidence="1">
    <location>
        <begin position="113"/>
        <end position="116"/>
    </location>
</feature>
<feature type="region of interest" description="G4" evidence="1">
    <location>
        <begin position="168"/>
        <end position="171"/>
    </location>
</feature>
<feature type="region of interest" description="G5" evidence="1">
    <location>
        <begin position="206"/>
        <end position="208"/>
    </location>
</feature>
<feature type="binding site" evidence="2">
    <location>
        <begin position="34"/>
        <end position="41"/>
    </location>
    <ligand>
        <name>GTP</name>
        <dbReference type="ChEBI" id="CHEBI:37565"/>
    </ligand>
</feature>
<feature type="binding site" evidence="2">
    <location>
        <begin position="113"/>
        <end position="117"/>
    </location>
    <ligand>
        <name>GTP</name>
        <dbReference type="ChEBI" id="CHEBI:37565"/>
    </ligand>
</feature>
<feature type="binding site" evidence="2">
    <location>
        <begin position="168"/>
        <end position="171"/>
    </location>
    <ligand>
        <name>GTP</name>
        <dbReference type="ChEBI" id="CHEBI:37565"/>
    </ligand>
</feature>
<evidence type="ECO:0000250" key="1"/>
<evidence type="ECO:0000255" key="2">
    <source>
        <dbReference type="HAMAP-Rule" id="MF_00062"/>
    </source>
</evidence>